<dbReference type="GO" id="GO:0005576">
    <property type="term" value="C:extracellular region"/>
    <property type="evidence" value="ECO:0007669"/>
    <property type="project" value="UniProtKB-SubCell"/>
</dbReference>
<dbReference type="GO" id="GO:0008200">
    <property type="term" value="F:ion channel inhibitor activity"/>
    <property type="evidence" value="ECO:0007669"/>
    <property type="project" value="InterPro"/>
</dbReference>
<dbReference type="GO" id="GO:0090729">
    <property type="term" value="F:toxin activity"/>
    <property type="evidence" value="ECO:0007669"/>
    <property type="project" value="UniProtKB-KW"/>
</dbReference>
<dbReference type="InterPro" id="IPR004214">
    <property type="entry name" value="Conotoxin"/>
</dbReference>
<dbReference type="Pfam" id="PF02950">
    <property type="entry name" value="Conotoxin"/>
    <property type="match status" value="1"/>
</dbReference>
<protein>
    <recommendedName>
        <fullName>Conotoxin Bu2</fullName>
    </recommendedName>
</protein>
<organism>
    <name type="scientific">Conus bullatus</name>
    <name type="common">Bubble cone</name>
    <dbReference type="NCBI Taxonomy" id="89438"/>
    <lineage>
        <taxon>Eukaryota</taxon>
        <taxon>Metazoa</taxon>
        <taxon>Spiralia</taxon>
        <taxon>Lophotrochozoa</taxon>
        <taxon>Mollusca</taxon>
        <taxon>Gastropoda</taxon>
        <taxon>Caenogastropoda</taxon>
        <taxon>Neogastropoda</taxon>
        <taxon>Conoidea</taxon>
        <taxon>Conidae</taxon>
        <taxon>Conus</taxon>
        <taxon>Textilia</taxon>
    </lineage>
</organism>
<comment type="subcellular location">
    <subcellularLocation>
        <location evidence="1">Secreted</location>
    </subcellularLocation>
</comment>
<comment type="tissue specificity">
    <text>Expressed by the venom duct.</text>
</comment>
<comment type="domain">
    <text>The presence of a 'disulfide through disulfide knot' structurally defines this protein as a knottin.</text>
</comment>
<comment type="domain">
    <text>The cysteine framework is VI/VII (C-C-CC-C-C).</text>
</comment>
<comment type="similarity">
    <text evidence="3">Belongs to the conotoxin O1 superfamily.</text>
</comment>
<sequence length="78" mass="8485">MKLTCVLIIAVLFLTAITADDSRDKQVYRAVGLIDKMRRIRASEGCRKKGDRCGTHLCCPGLRCGSGRAGGACRPPYN</sequence>
<keyword id="KW-1015">Disulfide bond</keyword>
<keyword id="KW-0872">Ion channel impairing toxin</keyword>
<keyword id="KW-0960">Knottin</keyword>
<keyword id="KW-0528">Neurotoxin</keyword>
<keyword id="KW-0964">Secreted</keyword>
<keyword id="KW-0732">Signal</keyword>
<keyword id="KW-0800">Toxin</keyword>
<accession>P0CY61</accession>
<evidence type="ECO:0000250" key="1"/>
<evidence type="ECO:0000255" key="2"/>
<evidence type="ECO:0000305" key="3"/>
<reference key="1">
    <citation type="journal article" date="2011" name="BMC Genomics">
        <title>Characterization of the Conus bullatus genome and its venom-duct transcriptome.</title>
        <authorList>
            <person name="Hu H."/>
            <person name="Bandyopadhyay P.K."/>
            <person name="Olivera B.M."/>
            <person name="Yandell M."/>
        </authorList>
    </citation>
    <scope>NUCLEOTIDE SEQUENCE [MRNA]</scope>
    <source>
        <tissue>Venom duct</tissue>
    </source>
</reference>
<feature type="signal peptide" evidence="2">
    <location>
        <begin position="1"/>
        <end position="19"/>
    </location>
</feature>
<feature type="propeptide" id="PRO_0000409937" evidence="3">
    <location>
        <begin position="20"/>
        <end position="41"/>
    </location>
</feature>
<feature type="peptide" id="PRO_0000409938" description="Conotoxin Bu2">
    <location>
        <begin position="42"/>
        <end position="78"/>
    </location>
</feature>
<feature type="disulfide bond" evidence="1">
    <location>
        <begin position="46"/>
        <end position="59"/>
    </location>
</feature>
<feature type="disulfide bond" evidence="1">
    <location>
        <begin position="53"/>
        <end position="64"/>
    </location>
</feature>
<feature type="disulfide bond" evidence="1">
    <location>
        <begin position="58"/>
        <end position="73"/>
    </location>
</feature>
<proteinExistence type="evidence at transcript level"/>
<name>O162_CONBU</name>